<reference key="1">
    <citation type="submission" date="1997-07" db="EMBL/GenBank/DDBJ databases">
        <title>Sequence analysis of the 70kb region between 17 and 23 degree of the Bacillus subtilis chromosome.</title>
        <authorList>
            <person name="Haga K."/>
            <person name="Liu H."/>
            <person name="Yasumoto K."/>
            <person name="Takahashi H."/>
            <person name="Yoshikawa H."/>
        </authorList>
    </citation>
    <scope>NUCLEOTIDE SEQUENCE [GENOMIC DNA]</scope>
    <source>
        <strain>168</strain>
    </source>
</reference>
<reference key="2">
    <citation type="journal article" date="1997" name="Nature">
        <title>The complete genome sequence of the Gram-positive bacterium Bacillus subtilis.</title>
        <authorList>
            <person name="Kunst F."/>
            <person name="Ogasawara N."/>
            <person name="Moszer I."/>
            <person name="Albertini A.M."/>
            <person name="Alloni G."/>
            <person name="Azevedo V."/>
            <person name="Bertero M.G."/>
            <person name="Bessieres P."/>
            <person name="Bolotin A."/>
            <person name="Borchert S."/>
            <person name="Borriss R."/>
            <person name="Boursier L."/>
            <person name="Brans A."/>
            <person name="Braun M."/>
            <person name="Brignell S.C."/>
            <person name="Bron S."/>
            <person name="Brouillet S."/>
            <person name="Bruschi C.V."/>
            <person name="Caldwell B."/>
            <person name="Capuano V."/>
            <person name="Carter N.M."/>
            <person name="Choi S.-K."/>
            <person name="Codani J.-J."/>
            <person name="Connerton I.F."/>
            <person name="Cummings N.J."/>
            <person name="Daniel R.A."/>
            <person name="Denizot F."/>
            <person name="Devine K.M."/>
            <person name="Duesterhoeft A."/>
            <person name="Ehrlich S.D."/>
            <person name="Emmerson P.T."/>
            <person name="Entian K.-D."/>
            <person name="Errington J."/>
            <person name="Fabret C."/>
            <person name="Ferrari E."/>
            <person name="Foulger D."/>
            <person name="Fritz C."/>
            <person name="Fujita M."/>
            <person name="Fujita Y."/>
            <person name="Fuma S."/>
            <person name="Galizzi A."/>
            <person name="Galleron N."/>
            <person name="Ghim S.-Y."/>
            <person name="Glaser P."/>
            <person name="Goffeau A."/>
            <person name="Golightly E.J."/>
            <person name="Grandi G."/>
            <person name="Guiseppi G."/>
            <person name="Guy B.J."/>
            <person name="Haga K."/>
            <person name="Haiech J."/>
            <person name="Harwood C.R."/>
            <person name="Henaut A."/>
            <person name="Hilbert H."/>
            <person name="Holsappel S."/>
            <person name="Hosono S."/>
            <person name="Hullo M.-F."/>
            <person name="Itaya M."/>
            <person name="Jones L.-M."/>
            <person name="Joris B."/>
            <person name="Karamata D."/>
            <person name="Kasahara Y."/>
            <person name="Klaerr-Blanchard M."/>
            <person name="Klein C."/>
            <person name="Kobayashi Y."/>
            <person name="Koetter P."/>
            <person name="Koningstein G."/>
            <person name="Krogh S."/>
            <person name="Kumano M."/>
            <person name="Kurita K."/>
            <person name="Lapidus A."/>
            <person name="Lardinois S."/>
            <person name="Lauber J."/>
            <person name="Lazarevic V."/>
            <person name="Lee S.-M."/>
            <person name="Levine A."/>
            <person name="Liu H."/>
            <person name="Masuda S."/>
            <person name="Mauel C."/>
            <person name="Medigue C."/>
            <person name="Medina N."/>
            <person name="Mellado R.P."/>
            <person name="Mizuno M."/>
            <person name="Moestl D."/>
            <person name="Nakai S."/>
            <person name="Noback M."/>
            <person name="Noone D."/>
            <person name="O'Reilly M."/>
            <person name="Ogawa K."/>
            <person name="Ogiwara A."/>
            <person name="Oudega B."/>
            <person name="Park S.-H."/>
            <person name="Parro V."/>
            <person name="Pohl T.M."/>
            <person name="Portetelle D."/>
            <person name="Porwollik S."/>
            <person name="Prescott A.M."/>
            <person name="Presecan E."/>
            <person name="Pujic P."/>
            <person name="Purnelle B."/>
            <person name="Rapoport G."/>
            <person name="Rey M."/>
            <person name="Reynolds S."/>
            <person name="Rieger M."/>
            <person name="Rivolta C."/>
            <person name="Rocha E."/>
            <person name="Roche B."/>
            <person name="Rose M."/>
            <person name="Sadaie Y."/>
            <person name="Sato T."/>
            <person name="Scanlan E."/>
            <person name="Schleich S."/>
            <person name="Schroeter R."/>
            <person name="Scoffone F."/>
            <person name="Sekiguchi J."/>
            <person name="Sekowska A."/>
            <person name="Seror S.J."/>
            <person name="Serror P."/>
            <person name="Shin B.-S."/>
            <person name="Soldo B."/>
            <person name="Sorokin A."/>
            <person name="Tacconi E."/>
            <person name="Takagi T."/>
            <person name="Takahashi H."/>
            <person name="Takemaru K."/>
            <person name="Takeuchi M."/>
            <person name="Tamakoshi A."/>
            <person name="Tanaka T."/>
            <person name="Terpstra P."/>
            <person name="Tognoni A."/>
            <person name="Tosato V."/>
            <person name="Uchiyama S."/>
            <person name="Vandenbol M."/>
            <person name="Vannier F."/>
            <person name="Vassarotti A."/>
            <person name="Viari A."/>
            <person name="Wambutt R."/>
            <person name="Wedler E."/>
            <person name="Wedler H."/>
            <person name="Weitzenegger T."/>
            <person name="Winters P."/>
            <person name="Wipat A."/>
            <person name="Yamamoto H."/>
            <person name="Yamane K."/>
            <person name="Yasumoto K."/>
            <person name="Yata K."/>
            <person name="Yoshida K."/>
            <person name="Yoshikawa H.-F."/>
            <person name="Zumstein E."/>
            <person name="Yoshikawa H."/>
            <person name="Danchin A."/>
        </authorList>
    </citation>
    <scope>NUCLEOTIDE SEQUENCE [LARGE SCALE GENOMIC DNA]</scope>
    <source>
        <strain>168</strain>
    </source>
</reference>
<gene>
    <name type="primary">ybfI</name>
    <name type="ordered locus">BSU02220</name>
</gene>
<sequence>MQNETRTLQLDPHLHIEAYRFKGIMQKFPNHFHDYYVIGFIEKGQRYLACQDQEYIINPGDLLLFNPRDTHSCEQIDGRTLDYRCINVMPDIMEKAVKEITGSGHLPYFSQHVLFRHELTASLQELHILISEEKQALRKEELFLHLLEELIRHYSDVTFLSSVPEPSDEVKMVCEFLEEHYAENVTLNDLSELTGWSKYHLLRSFTKQKGITPNSYMETIRINQAKKLLEQGVRPIDAAFQTGFSDQSHMTKFFKRQVGLTPKQYMKIFEKELHR</sequence>
<accession>O31449</accession>
<accession>Q7DL49</accession>
<dbReference type="EMBL" id="AB006424">
    <property type="protein sequence ID" value="BAA33119.1"/>
    <property type="molecule type" value="Genomic_DNA"/>
</dbReference>
<dbReference type="EMBL" id="AL009126">
    <property type="protein sequence ID" value="CAB12016.1"/>
    <property type="molecule type" value="Genomic_DNA"/>
</dbReference>
<dbReference type="PIR" id="D69749">
    <property type="entry name" value="D69749"/>
</dbReference>
<dbReference type="RefSeq" id="NP_388104.1">
    <property type="nucleotide sequence ID" value="NC_000964.3"/>
</dbReference>
<dbReference type="RefSeq" id="WP_003246321.1">
    <property type="nucleotide sequence ID" value="NZ_OZ025638.1"/>
</dbReference>
<dbReference type="SMR" id="O31449"/>
<dbReference type="FunCoup" id="O31449">
    <property type="interactions" value="44"/>
</dbReference>
<dbReference type="STRING" id="224308.BSU02220"/>
<dbReference type="PaxDb" id="224308-BSU02220"/>
<dbReference type="EnsemblBacteria" id="CAB12016">
    <property type="protein sequence ID" value="CAB12016"/>
    <property type="gene ID" value="BSU_02220"/>
</dbReference>
<dbReference type="GeneID" id="938437"/>
<dbReference type="KEGG" id="bsu:BSU02220"/>
<dbReference type="PATRIC" id="fig|224308.179.peg.228"/>
<dbReference type="eggNOG" id="COG1917">
    <property type="taxonomic scope" value="Bacteria"/>
</dbReference>
<dbReference type="eggNOG" id="COG2207">
    <property type="taxonomic scope" value="Bacteria"/>
</dbReference>
<dbReference type="InParanoid" id="O31449"/>
<dbReference type="OrthoDB" id="183331at2"/>
<dbReference type="PhylomeDB" id="O31449"/>
<dbReference type="BioCyc" id="BSUB:BSU02220-MONOMER"/>
<dbReference type="Proteomes" id="UP000001570">
    <property type="component" value="Chromosome"/>
</dbReference>
<dbReference type="GO" id="GO:0000987">
    <property type="term" value="F:cis-regulatory region sequence-specific DNA binding"/>
    <property type="evidence" value="ECO:0000318"/>
    <property type="project" value="GO_Central"/>
</dbReference>
<dbReference type="GO" id="GO:0003700">
    <property type="term" value="F:DNA-binding transcription factor activity"/>
    <property type="evidence" value="ECO:0000318"/>
    <property type="project" value="GO_Central"/>
</dbReference>
<dbReference type="GO" id="GO:0006355">
    <property type="term" value="P:regulation of DNA-templated transcription"/>
    <property type="evidence" value="ECO:0000318"/>
    <property type="project" value="GO_Central"/>
</dbReference>
<dbReference type="CDD" id="cd07001">
    <property type="entry name" value="cupin_YbfI-like_N"/>
    <property type="match status" value="1"/>
</dbReference>
<dbReference type="Gene3D" id="1.10.10.60">
    <property type="entry name" value="Homeodomain-like"/>
    <property type="match status" value="2"/>
</dbReference>
<dbReference type="Gene3D" id="2.60.120.10">
    <property type="entry name" value="Jelly Rolls"/>
    <property type="match status" value="1"/>
</dbReference>
<dbReference type="InterPro" id="IPR003313">
    <property type="entry name" value="AraC-bd"/>
</dbReference>
<dbReference type="InterPro" id="IPR050204">
    <property type="entry name" value="AraC_XylS_family_regulators"/>
</dbReference>
<dbReference type="InterPro" id="IPR009057">
    <property type="entry name" value="Homeodomain-like_sf"/>
</dbReference>
<dbReference type="InterPro" id="IPR037923">
    <property type="entry name" value="HTH-like"/>
</dbReference>
<dbReference type="InterPro" id="IPR018060">
    <property type="entry name" value="HTH_AraC"/>
</dbReference>
<dbReference type="InterPro" id="IPR014710">
    <property type="entry name" value="RmlC-like_jellyroll"/>
</dbReference>
<dbReference type="PANTHER" id="PTHR46796">
    <property type="entry name" value="HTH-TYPE TRANSCRIPTIONAL ACTIVATOR RHAS-RELATED"/>
    <property type="match status" value="1"/>
</dbReference>
<dbReference type="PANTHER" id="PTHR46796:SF2">
    <property type="entry name" value="TRANSCRIPTIONAL REGULATORY PROTEIN"/>
    <property type="match status" value="1"/>
</dbReference>
<dbReference type="Pfam" id="PF02311">
    <property type="entry name" value="AraC_binding"/>
    <property type="match status" value="1"/>
</dbReference>
<dbReference type="Pfam" id="PF12833">
    <property type="entry name" value="HTH_18"/>
    <property type="match status" value="1"/>
</dbReference>
<dbReference type="SMART" id="SM00342">
    <property type="entry name" value="HTH_ARAC"/>
    <property type="match status" value="1"/>
</dbReference>
<dbReference type="SUPFAM" id="SSF46689">
    <property type="entry name" value="Homeodomain-like"/>
    <property type="match status" value="2"/>
</dbReference>
<dbReference type="SUPFAM" id="SSF51215">
    <property type="entry name" value="Regulatory protein AraC"/>
    <property type="match status" value="1"/>
</dbReference>
<dbReference type="PROSITE" id="PS01124">
    <property type="entry name" value="HTH_ARAC_FAMILY_2"/>
    <property type="match status" value="1"/>
</dbReference>
<proteinExistence type="predicted"/>
<keyword id="KW-0238">DNA-binding</keyword>
<keyword id="KW-1185">Reference proteome</keyword>
<keyword id="KW-0677">Repeat</keyword>
<keyword id="KW-0804">Transcription</keyword>
<keyword id="KW-0805">Transcription regulation</keyword>
<feature type="chain" id="PRO_0000360572" description="Uncharacterized HTH-type transcriptional regulator YbfI">
    <location>
        <begin position="1"/>
        <end position="275"/>
    </location>
</feature>
<feature type="domain" description="HTH araC/xylS-type" evidence="1">
    <location>
        <begin position="171"/>
        <end position="268"/>
    </location>
</feature>
<feature type="DNA-binding region" description="H-T-H motif" evidence="1">
    <location>
        <begin position="188"/>
        <end position="209"/>
    </location>
</feature>
<feature type="DNA-binding region" description="H-T-H motif" evidence="1">
    <location>
        <begin position="235"/>
        <end position="258"/>
    </location>
</feature>
<organism>
    <name type="scientific">Bacillus subtilis (strain 168)</name>
    <dbReference type="NCBI Taxonomy" id="224308"/>
    <lineage>
        <taxon>Bacteria</taxon>
        <taxon>Bacillati</taxon>
        <taxon>Bacillota</taxon>
        <taxon>Bacilli</taxon>
        <taxon>Bacillales</taxon>
        <taxon>Bacillaceae</taxon>
        <taxon>Bacillus</taxon>
    </lineage>
</organism>
<evidence type="ECO:0000255" key="1">
    <source>
        <dbReference type="PROSITE-ProRule" id="PRU00593"/>
    </source>
</evidence>
<protein>
    <recommendedName>
        <fullName>Uncharacterized HTH-type transcriptional regulator YbfI</fullName>
    </recommendedName>
</protein>
<name>YBFI_BACSU</name>